<comment type="function">
    <text>Inhibition of trypsin.</text>
</comment>
<comment type="miscellaneous">
    <text>The sequence of variant A is shown.</text>
</comment>
<comment type="miscellaneous">
    <text>Electrophoresis identifies three genetically distinct variants, A, B, and C, that are inherited as codominant alleles.</text>
</comment>
<comment type="similarity">
    <text evidence="5">Belongs to the protease inhibitor I3 (leguminous Kunitz-type inhibitor) family.</text>
</comment>
<comment type="caution">
    <text evidence="5">PubMed:8318586 sequence was originally thought to be rat caltrin. A number of peptide fragments were derived from a trypsin digest of caltrin and soybean trypsin inhibitor was used to stop the digestion. It appears that some of the inhibitor was also digested and sequenced.</text>
</comment>
<keyword id="KW-0002">3D-structure</keyword>
<keyword id="KW-0903">Direct protein sequencing</keyword>
<keyword id="KW-1015">Disulfide bond</keyword>
<keyword id="KW-0646">Protease inhibitor</keyword>
<keyword id="KW-1185">Reference proteome</keyword>
<keyword id="KW-0722">Serine protease inhibitor</keyword>
<keyword id="KW-0732">Signal</keyword>
<dbReference type="EMBL" id="S45092">
    <property type="protein sequence ID" value="AAB23464.1"/>
    <property type="molecule type" value="mRNA"/>
</dbReference>
<dbReference type="PIR" id="JQ0968">
    <property type="entry name" value="JQ0968"/>
</dbReference>
<dbReference type="RefSeq" id="NP_001238611.1">
    <property type="nucleotide sequence ID" value="NM_001251682.1"/>
</dbReference>
<dbReference type="PDB" id="1AVU">
    <property type="method" value="X-ray"/>
    <property type="resolution" value="2.30 A"/>
    <property type="chains" value="A=25-205"/>
</dbReference>
<dbReference type="PDB" id="1AVW">
    <property type="method" value="X-ray"/>
    <property type="resolution" value="1.75 A"/>
    <property type="chains" value="B=25-201"/>
</dbReference>
<dbReference type="PDB" id="1AVX">
    <property type="method" value="X-ray"/>
    <property type="resolution" value="1.90 A"/>
    <property type="chains" value="B=25-201"/>
</dbReference>
<dbReference type="PDB" id="1BA7">
    <property type="method" value="X-ray"/>
    <property type="resolution" value="2.50 A"/>
    <property type="chains" value="A/B=25-205"/>
</dbReference>
<dbReference type="PDB" id="6NTT">
    <property type="method" value="X-ray"/>
    <property type="resolution" value="2.40 A"/>
    <property type="chains" value="A/B=1-216"/>
</dbReference>
<dbReference type="PDB" id="6O1F">
    <property type="method" value="X-ray"/>
    <property type="resolution" value="2.15 A"/>
    <property type="chains" value="I=25-216"/>
</dbReference>
<dbReference type="PDBsum" id="1AVU"/>
<dbReference type="PDBsum" id="1AVW"/>
<dbReference type="PDBsum" id="1AVX"/>
<dbReference type="PDBsum" id="1BA7"/>
<dbReference type="PDBsum" id="6NTT"/>
<dbReference type="PDBsum" id="6O1F"/>
<dbReference type="BMRB" id="P01070"/>
<dbReference type="PCDDB" id="P01070"/>
<dbReference type="SMR" id="P01070"/>
<dbReference type="DIP" id="DIP-6101N"/>
<dbReference type="MINT" id="P01070"/>
<dbReference type="STRING" id="3847.P01070"/>
<dbReference type="Allergome" id="1144">
    <property type="allergen name" value="Gly m TI"/>
</dbReference>
<dbReference type="MEROPS" id="I03.001"/>
<dbReference type="PaxDb" id="3847-GLYMA08G45531.1"/>
<dbReference type="GeneID" id="547831"/>
<dbReference type="KEGG" id="gmx:547831"/>
<dbReference type="InParanoid" id="P01070"/>
<dbReference type="OrthoDB" id="1745944at2759"/>
<dbReference type="EvolutionaryTrace" id="P01070"/>
<dbReference type="Proteomes" id="UP000008827">
    <property type="component" value="Unplaced"/>
</dbReference>
<dbReference type="GO" id="GO:0004867">
    <property type="term" value="F:serine-type endopeptidase inhibitor activity"/>
    <property type="evidence" value="ECO:0007669"/>
    <property type="project" value="UniProtKB-KW"/>
</dbReference>
<dbReference type="CDD" id="cd23363">
    <property type="entry name" value="beta-trefoil_STI_SKTI"/>
    <property type="match status" value="1"/>
</dbReference>
<dbReference type="Gene3D" id="2.80.10.50">
    <property type="match status" value="1"/>
</dbReference>
<dbReference type="InterPro" id="IPR011065">
    <property type="entry name" value="Kunitz_inhibitor_STI-like_sf"/>
</dbReference>
<dbReference type="InterPro" id="IPR002160">
    <property type="entry name" value="Prot_inh_Kunz-lg"/>
</dbReference>
<dbReference type="PANTHER" id="PTHR33107">
    <property type="entry name" value="KUNITZ TRYPSIN INHIBITOR 2"/>
    <property type="match status" value="1"/>
</dbReference>
<dbReference type="PANTHER" id="PTHR33107:SF81">
    <property type="entry name" value="TRYPSIN INHIBITOR A"/>
    <property type="match status" value="1"/>
</dbReference>
<dbReference type="Pfam" id="PF00197">
    <property type="entry name" value="Kunitz_legume"/>
    <property type="match status" value="1"/>
</dbReference>
<dbReference type="PRINTS" id="PR00291">
    <property type="entry name" value="KUNITZINHBTR"/>
</dbReference>
<dbReference type="SMART" id="SM00452">
    <property type="entry name" value="STI"/>
    <property type="match status" value="1"/>
</dbReference>
<dbReference type="SUPFAM" id="SSF50386">
    <property type="entry name" value="STI-like"/>
    <property type="match status" value="1"/>
</dbReference>
<dbReference type="PROSITE" id="PS00283">
    <property type="entry name" value="SOYBEAN_KUNITZ"/>
    <property type="match status" value="1"/>
</dbReference>
<accession>P01070</accession>
<accession>Q9QV66</accession>
<protein>
    <recommendedName>
        <fullName>Trypsin inhibitor A</fullName>
    </recommendedName>
    <alternativeName>
        <fullName>Kunitz-type trypsin inhibitor A</fullName>
    </alternativeName>
</protein>
<name>ITRA_SOYBN</name>
<gene>
    <name type="primary">KTI3</name>
</gene>
<reference key="1">
    <citation type="journal article" date="1989" name="Plant Cell">
        <title>A frameshift mutation prevents Kunitz trypsin inhibitor mRNA accumulation in soybean embryos.</title>
        <authorList>
            <person name="Jofuku K.D."/>
            <person name="Schipper R.D."/>
            <person name="Goldberg R.B."/>
        </authorList>
    </citation>
    <scope>NUCLEOTIDE SEQUENCE [MRNA]</scope>
</reference>
<reference key="2">
    <citation type="journal article" date="1973" name="Eur. J. Biochem.">
        <title>Studies on soybean trypsin inhibitors. 3. Amino-acid sequences of the carboxyl-terminal region and the complete amino-acid sequence of soybean trypsin inhibitor (Kunitz).</title>
        <authorList>
            <person name="Koide T."/>
            <person name="Ikenaka T."/>
        </authorList>
    </citation>
    <scope>PROTEIN SEQUENCE OF 25-205 (VARIANT A)</scope>
</reference>
<reference key="3">
    <citation type="journal article" date="1985" name="J. Biochem.">
        <title>Comparative study on amino acid sequences of Kunitz-type soybean trypsin inhibitors, Tia, Tib, and Tic.</title>
        <authorList>
            <person name="Kim S.-H."/>
            <person name="Hara S."/>
            <person name="Hase S."/>
            <person name="Ikenaka T."/>
            <person name="Toda H."/>
            <person name="Kitamura K."/>
            <person name="Kaizuma N."/>
        </authorList>
    </citation>
    <scope>PROTEIN SEQUENCE OF 25-205 (VARIANT C)</scope>
    <scope>SEQUENCE REVISION (VARIANT A)</scope>
    <source>
        <strain>cv. Raiden</strain>
    </source>
</reference>
<reference key="4">
    <citation type="journal article" date="1993" name="Biol. Reprod.">
        <title>Isolation and characterization of a 54-kilodalton precursor of caltrin, the calcium transport inhibitor protein from seminal vesicles of the rat.</title>
        <authorList>
            <person name="Coronel C.E."/>
            <person name="Novella M.L."/>
            <person name="Winnica D.E."/>
            <person name="Lardy H.A."/>
        </authorList>
    </citation>
    <scope>PROTEIN SEQUENCE OF 25-56</scope>
</reference>
<reference key="5">
    <citation type="journal article" date="1966" name="Biochem. Biophys. Res. Commun.">
        <title>The amino acid sequences around the disulfide bonds of soybean trypsin inhibitor.</title>
        <authorList>
            <person name="Brown J.R."/>
            <person name="Lerman N."/>
            <person name="Bohak Z."/>
        </authorList>
    </citation>
    <scope>DISULFIDE BONDS</scope>
</reference>
<reference key="6">
    <citation type="journal article" date="1966" name="J. Biol. Chem.">
        <title>The reactive site of trypsin inhibitors.</title>
        <authorList>
            <person name="Ozawa K."/>
            <person name="Laskowski M. Jr."/>
        </authorList>
    </citation>
    <scope>INHIBITORY SITE</scope>
</reference>
<reference key="7">
    <citation type="journal article" date="1974" name="Biochemistry">
        <title>Crystal structure of the complex of porcine trypsin with soybean trypsin inhibitor (Kunitz) at 2.6-A resolution.</title>
        <authorList>
            <person name="Sweet R.M."/>
            <person name="Wright H.T."/>
            <person name="Janin J."/>
            <person name="Chothia C.H."/>
            <person name="Blow D.M."/>
        </authorList>
    </citation>
    <scope>X-RAY CRYSTALLOGRAPHY (2.6 ANGSTROMS)</scope>
</reference>
<reference key="8">
    <citation type="journal article" date="1998" name="Acta Crystallogr. D">
        <title>Structure of the Kunitz-type soybean trypsin inhibitor (STI): implication for the interactions between members of the STI family and tissue-plasminogen activator.</title>
        <authorList>
            <person name="de Meester P."/>
            <person name="Brick P."/>
            <person name="Lloyd L.F."/>
            <person name="Blow D.M."/>
            <person name="Onesti S."/>
        </authorList>
    </citation>
    <scope>X-RAY CRYSTALLOGRAPHY (2.5 ANGSTROMS)</scope>
</reference>
<reference key="9">
    <citation type="journal article" date="1998" name="J. Mol. Biol.">
        <title>Kunitz-type soybean trypsin inhibitor revisited: refined structure of its complex with porcine trypsin reveals an insight into the interaction between a homologous inhibitor from Erythrina caffra and tissue-type plasminogen activator.</title>
        <authorList>
            <person name="Song H.K."/>
            <person name="Suh S.W."/>
        </authorList>
    </citation>
    <scope>X-RAY CRYSTALLOGRAPHY (2.3 ANGSTROMS)</scope>
</reference>
<proteinExistence type="evidence at protein level"/>
<evidence type="ECO:0000269" key="1">
    <source>
    </source>
</evidence>
<evidence type="ECO:0000269" key="2">
    <source>
    </source>
</evidence>
<evidence type="ECO:0000269" key="3">
    <source>
    </source>
</evidence>
<evidence type="ECO:0000269" key="4">
    <source>
    </source>
</evidence>
<evidence type="ECO:0000305" key="5"/>
<evidence type="ECO:0007829" key="6">
    <source>
        <dbReference type="PDB" id="1AVU"/>
    </source>
</evidence>
<evidence type="ECO:0007829" key="7">
    <source>
        <dbReference type="PDB" id="1AVW"/>
    </source>
</evidence>
<evidence type="ECO:0007829" key="8">
    <source>
        <dbReference type="PDB" id="1AVX"/>
    </source>
</evidence>
<evidence type="ECO:0007829" key="9">
    <source>
        <dbReference type="PDB" id="6NTT"/>
    </source>
</evidence>
<evidence type="ECO:0007829" key="10">
    <source>
        <dbReference type="PDB" id="6O1F"/>
    </source>
</evidence>
<feature type="signal peptide" evidence="1 2 4">
    <location>
        <begin position="1"/>
        <end position="24"/>
    </location>
</feature>
<feature type="chain" id="PRO_0000016889" description="Trypsin inhibitor A">
    <location>
        <begin position="25"/>
        <end position="205"/>
    </location>
</feature>
<feature type="propeptide" id="PRO_0000016890">
    <location>
        <begin position="206"/>
        <end position="216"/>
    </location>
</feature>
<feature type="site" description="Reactive bond for trypsin">
    <location>
        <begin position="87"/>
        <end position="88"/>
    </location>
</feature>
<feature type="disulfide bond" evidence="3">
    <location>
        <begin position="63"/>
        <end position="110"/>
    </location>
</feature>
<feature type="disulfide bond" evidence="3">
    <location>
        <begin position="160"/>
        <end position="169"/>
    </location>
</feature>
<feature type="sequence variant" description="In variant C.">
    <original>G</original>
    <variation>E</variation>
    <location>
        <position position="79"/>
    </location>
</feature>
<feature type="sequence conflict" description="In Ref. 4; AA sequence." evidence="5" ref="4">
    <original>D</original>
    <variation>S</variation>
    <location>
        <position position="25"/>
    </location>
</feature>
<feature type="turn" evidence="6">
    <location>
        <begin position="30"/>
        <end position="32"/>
    </location>
</feature>
<feature type="strand" evidence="7">
    <location>
        <begin position="39"/>
        <end position="47"/>
    </location>
</feature>
<feature type="strand" evidence="7">
    <location>
        <begin position="53"/>
        <end position="56"/>
    </location>
</feature>
<feature type="strand" evidence="7">
    <location>
        <begin position="66"/>
        <end position="69"/>
    </location>
</feature>
<feature type="strand" evidence="7">
    <location>
        <begin position="80"/>
        <end position="83"/>
    </location>
</feature>
<feature type="strand" evidence="10">
    <location>
        <begin position="85"/>
        <end position="87"/>
    </location>
</feature>
<feature type="strand" evidence="9">
    <location>
        <begin position="88"/>
        <end position="90"/>
    </location>
</feature>
<feature type="strand" evidence="7">
    <location>
        <begin position="97"/>
        <end position="101"/>
    </location>
</feature>
<feature type="helix" evidence="7">
    <location>
        <begin position="108"/>
        <end position="110"/>
    </location>
</feature>
<feature type="strand" evidence="7">
    <location>
        <begin position="118"/>
        <end position="120"/>
    </location>
</feature>
<feature type="strand" evidence="7">
    <location>
        <begin position="126"/>
        <end position="130"/>
    </location>
</feature>
<feature type="strand" evidence="9">
    <location>
        <begin position="135"/>
        <end position="137"/>
    </location>
</feature>
<feature type="strand" evidence="7">
    <location>
        <begin position="140"/>
        <end position="146"/>
    </location>
</feature>
<feature type="strand" evidence="8">
    <location>
        <begin position="148"/>
        <end position="152"/>
    </location>
</feature>
<feature type="strand" evidence="7">
    <location>
        <begin position="155"/>
        <end position="161"/>
    </location>
</feature>
<feature type="helix" evidence="10">
    <location>
        <begin position="166"/>
        <end position="168"/>
    </location>
</feature>
<feature type="strand" evidence="7">
    <location>
        <begin position="170"/>
        <end position="176"/>
    </location>
</feature>
<feature type="turn" evidence="7">
    <location>
        <begin position="178"/>
        <end position="180"/>
    </location>
</feature>
<feature type="strand" evidence="7">
    <location>
        <begin position="183"/>
        <end position="187"/>
    </location>
</feature>
<feature type="strand" evidence="10">
    <location>
        <begin position="189"/>
        <end position="191"/>
    </location>
</feature>
<feature type="strand" evidence="7">
    <location>
        <begin position="194"/>
        <end position="199"/>
    </location>
</feature>
<organism>
    <name type="scientific">Glycine max</name>
    <name type="common">Soybean</name>
    <name type="synonym">Glycine hispida</name>
    <dbReference type="NCBI Taxonomy" id="3847"/>
    <lineage>
        <taxon>Eukaryota</taxon>
        <taxon>Viridiplantae</taxon>
        <taxon>Streptophyta</taxon>
        <taxon>Embryophyta</taxon>
        <taxon>Tracheophyta</taxon>
        <taxon>Spermatophyta</taxon>
        <taxon>Magnoliopsida</taxon>
        <taxon>eudicotyledons</taxon>
        <taxon>Gunneridae</taxon>
        <taxon>Pentapetalae</taxon>
        <taxon>rosids</taxon>
        <taxon>fabids</taxon>
        <taxon>Fabales</taxon>
        <taxon>Fabaceae</taxon>
        <taxon>Papilionoideae</taxon>
        <taxon>50 kb inversion clade</taxon>
        <taxon>NPAAA clade</taxon>
        <taxon>indigoferoid/millettioid clade</taxon>
        <taxon>Phaseoleae</taxon>
        <taxon>Glycine</taxon>
        <taxon>Glycine subgen. Soja</taxon>
    </lineage>
</organism>
<sequence length="216" mass="24005">MKSTIFFLFLFCAFTTSYLPSAIADFVLDNEGNPLENGGTYYILSDITAFGGIRAAPTGNERCPLTVVQSRNELDKGIGTIISSPYRIRFIAEGHPLSLKFDSFAVIMLCVGIPTEWSVVEDLPEGPAVKIGENKDAMDGWFRLERVSDDEFNNYKLVFCPQQAEDDKCGDIGISIDHDDGTRRLVVSKNKPLVVQFQKLDKESLAKKNHGLSRSE</sequence>